<sequence length="675" mass="75849">MNNNGNALSRTALTPTNNKVISGDLVTNGLPPIDNNIICSNGFMPINVTRKNPFRKRTTQEFIREWTEWKENSPSLFTAPIVGVVTSTLLEALKKQVQSRLLLLMTNLLFPNNSTSTMEEILRATEQYVQEQLDTVTWNRVSQELEGLKNNLRTFNDQIDDFLQNRVEISPTAMIDSINTMQQVFVNRLPQFQLSDYQLLLLPLFAQGATLHLTFIRDIIINAGEWNIPEAQLNTCKRYLKQYVAQYSNYALSTYEGAFRARFYPRATLENMLQFKTFMTLNVLDLVSIWSLLKYMNLYISTSANLYNIGDNKVNEGEYSISYWPFFNSYIQTKSNYVLSGVSGYAIRWYYLNTFFGEYIQDNLYNIIASYVGGVNGPKIGVQLSTTELDKQIKQQARAGMPTGLDDLSFNCTLRNPTTVPYFACNFQELTSSGTAGTGGFIRSDVFRSEDNICGLGTGYASAWTSYPDYYITNISATVQVDGINIDITPLCFGEDRAITSTHGVNKVIAVYNRKANIAGTNQNGTMIHQAPNDGTGFTVSPLHLASFTHPSEAHIQENYGNSGDSLRLTGPTTAITYMLSGDGRTIYKLVLRVSGVITRITAKVRGNSIGYLEYINTVDNNQGITDNGSKFQDFEFRPTITIDAQTPIVLEFSATSNFDLMNLIFIPYYDTPIY</sequence>
<proteinExistence type="evidence at transcript level"/>
<name>C18BA_PAEPP</name>
<reference key="1">
    <citation type="submission" date="1999-07" db="EMBL/GenBank/DDBJ databases">
        <title>Detection of two new cry genes in Paenibacillus popilliae.</title>
        <authorList>
            <person name="Patel R."/>
            <person name="Yousten A.A."/>
            <person name="Rippere K."/>
        </authorList>
    </citation>
    <scope>NUCLEOTIDE SEQUENCE [GENOMIC DNA]</scope>
    <source>
        <strain>BP3</strain>
    </source>
</reference>
<gene>
    <name type="primary">cry18Ba</name>
    <name type="synonym">cryXVIIIB(a)</name>
</gene>
<protein>
    <recommendedName>
        <fullName>Parasporal crystal protein Cry18Ba</fullName>
    </recommendedName>
    <alternativeName>
        <fullName>76 kDa crystal protein</fullName>
    </alternativeName>
    <alternativeName>
        <fullName>Crystaline parasporal protoxin</fullName>
    </alternativeName>
    <alternativeName>
        <fullName>Parasporal delta-endotoxin CryXVIIIB(a)</fullName>
    </alternativeName>
</protein>
<accession>P57091</accession>
<evidence type="ECO:0000250" key="1"/>
<evidence type="ECO:0000305" key="2"/>
<organism>
    <name type="scientific">Paenibacillus popilliae</name>
    <name type="common">Bacillus popilliae</name>
    <dbReference type="NCBI Taxonomy" id="78057"/>
    <lineage>
        <taxon>Bacteria</taxon>
        <taxon>Bacillati</taxon>
        <taxon>Bacillota</taxon>
        <taxon>Bacilli</taxon>
        <taxon>Bacillales</taxon>
        <taxon>Paenibacillaceae</taxon>
        <taxon>Paenibacillus</taxon>
    </lineage>
</organism>
<feature type="chain" id="PRO_0000174092" description="Parasporal crystal protein Cry18Ba">
    <location>
        <begin position="1"/>
        <end position="675"/>
    </location>
</feature>
<comment type="function">
    <text evidence="1">Binds to the brush border membrane vesicles of scarab larvae and damages the gut wall somehow to allow the vegetative cells of P.popilliae to enter the hemolymph.</text>
</comment>
<comment type="developmental stage">
    <text>The crystal protein is produced during sporulation and is accumulated both as an inclusion and as part of the spore coat.</text>
</comment>
<comment type="similarity">
    <text evidence="2">Belongs to the delta endotoxin family.</text>
</comment>
<dbReference type="EMBL" id="AF169250">
    <property type="protein sequence ID" value="AAF89667.1"/>
    <property type="molecule type" value="Genomic_DNA"/>
</dbReference>
<dbReference type="SMR" id="P57091"/>
<dbReference type="GO" id="GO:0005102">
    <property type="term" value="F:signaling receptor binding"/>
    <property type="evidence" value="ECO:0007669"/>
    <property type="project" value="InterPro"/>
</dbReference>
<dbReference type="GO" id="GO:0090729">
    <property type="term" value="F:toxin activity"/>
    <property type="evidence" value="ECO:0007669"/>
    <property type="project" value="UniProtKB-KW"/>
</dbReference>
<dbReference type="GO" id="GO:0030435">
    <property type="term" value="P:sporulation resulting in formation of a cellular spore"/>
    <property type="evidence" value="ECO:0007669"/>
    <property type="project" value="UniProtKB-KW"/>
</dbReference>
<dbReference type="GO" id="GO:0001907">
    <property type="term" value="P:symbiont-mediated killing of host cell"/>
    <property type="evidence" value="ECO:0007669"/>
    <property type="project" value="InterPro"/>
</dbReference>
<dbReference type="Gene3D" id="2.60.120.260">
    <property type="entry name" value="Galactose-binding domain-like"/>
    <property type="match status" value="1"/>
</dbReference>
<dbReference type="Gene3D" id="2.100.10.10">
    <property type="entry name" value="Pesticidal crystal protein, central domain"/>
    <property type="match status" value="2"/>
</dbReference>
<dbReference type="Gene3D" id="1.20.190.10">
    <property type="entry name" value="Pesticidal crystal protein, N-terminal domain"/>
    <property type="match status" value="1"/>
</dbReference>
<dbReference type="InterPro" id="IPR008979">
    <property type="entry name" value="Galactose-bd-like_sf"/>
</dbReference>
<dbReference type="InterPro" id="IPR038979">
    <property type="entry name" value="Pest_crys"/>
</dbReference>
<dbReference type="InterPro" id="IPR005638">
    <property type="entry name" value="Pest_crys_dom-III"/>
</dbReference>
<dbReference type="InterPro" id="IPR005639">
    <property type="entry name" value="Pest_crys_dom_I"/>
</dbReference>
<dbReference type="InterPro" id="IPR036716">
    <property type="entry name" value="Pest_crys_N_sf"/>
</dbReference>
<dbReference type="InterPro" id="IPR015214">
    <property type="entry name" value="Pest_cryst_cen_dom_Cry2A/18"/>
</dbReference>
<dbReference type="InterPro" id="IPR036399">
    <property type="entry name" value="Pest_cryst_cen_dom_sf"/>
</dbReference>
<dbReference type="PANTHER" id="PTHR37003">
    <property type="entry name" value="ENDOTOXIN_N DOMAIN-CONTAINING PROTEIN-RELATED"/>
    <property type="match status" value="1"/>
</dbReference>
<dbReference type="PANTHER" id="PTHR37003:SF2">
    <property type="entry name" value="PESTICIDAL CRYSTAL PROTEIN N-TERMINAL DOMAIN-CONTAINING PROTEIN"/>
    <property type="match status" value="1"/>
</dbReference>
<dbReference type="Pfam" id="PF03944">
    <property type="entry name" value="Endotoxin_C"/>
    <property type="match status" value="1"/>
</dbReference>
<dbReference type="Pfam" id="PF09131">
    <property type="entry name" value="Endotoxin_mid"/>
    <property type="match status" value="1"/>
</dbReference>
<dbReference type="Pfam" id="PF03945">
    <property type="entry name" value="Endotoxin_N"/>
    <property type="match status" value="1"/>
</dbReference>
<dbReference type="SUPFAM" id="SSF51096">
    <property type="entry name" value="delta-Endotoxin (insectocide), middle domain"/>
    <property type="match status" value="1"/>
</dbReference>
<dbReference type="SUPFAM" id="SSF56849">
    <property type="entry name" value="delta-Endotoxin (insectocide), N-terminal domain"/>
    <property type="match status" value="1"/>
</dbReference>
<dbReference type="SUPFAM" id="SSF49785">
    <property type="entry name" value="Galactose-binding domain-like"/>
    <property type="match status" value="1"/>
</dbReference>
<keyword id="KW-0749">Sporulation</keyword>
<keyword id="KW-0800">Toxin</keyword>
<keyword id="KW-0843">Virulence</keyword>